<comment type="function">
    <text evidence="1">Catalyzes the NAD-dependent reduction of succinylglutamate semialdehyde into succinylglutamate.</text>
</comment>
<comment type="catalytic activity">
    <reaction evidence="1">
        <text>N-succinyl-L-glutamate 5-semialdehyde + NAD(+) + H2O = N-succinyl-L-glutamate + NADH + 2 H(+)</text>
        <dbReference type="Rhea" id="RHEA:10812"/>
        <dbReference type="ChEBI" id="CHEBI:15377"/>
        <dbReference type="ChEBI" id="CHEBI:15378"/>
        <dbReference type="ChEBI" id="CHEBI:57540"/>
        <dbReference type="ChEBI" id="CHEBI:57945"/>
        <dbReference type="ChEBI" id="CHEBI:58520"/>
        <dbReference type="ChEBI" id="CHEBI:58763"/>
        <dbReference type="EC" id="1.2.1.71"/>
    </reaction>
</comment>
<comment type="pathway">
    <text evidence="1">Amino-acid degradation; L-arginine degradation via AST pathway; L-glutamate and succinate from L-arginine: step 4/5.</text>
</comment>
<comment type="similarity">
    <text evidence="1">Belongs to the aldehyde dehydrogenase family. AstD subfamily.</text>
</comment>
<sequence>MTELFIDGAWVAGSGPAFASRNPGTDDIAWQGASASAADVDRAIMSARRAFADWSALDFESRCAIAKRFAALLNERKEALAAAIGRETGKPLWEARTEVAAMAAKVGISIQAYQERTGEKRQDMADGVAVLRHRPHGVVAVFGPYNFPGHLPNGHIVPALIAGNTVVFKPSELAPGVAQATVEVWKDAGLPAGVLNLVQGEKDTGIALANHRQIDGLFFTGSSDTGTLLHKQFGGRPEIVLALEMGGNNPLVIGEVEDIDAAVHHTIQSAFLSAGQRCTCARRIFVPQGAFGDRFLARFVDVTSKITADVFDADPQPFMGAVISARAAAKLVDAQSRLIEQGAQPIIAMKQRDPRLGFVNAAIVDVTNVANLPDEEHFGPLAQIVRYADFDEAIARANDTAFGLSAGLLADDARAWEHFRRTIRAGIVNWNRPTNGASSAAPFGGTGRSGNHRPSAYYAADYCAYPMASVESAQLTLPASLSPGLHF</sequence>
<proteinExistence type="inferred from homology"/>
<feature type="chain" id="PRO_1000138040" description="N-succinylglutamate 5-semialdehyde dehydrogenase">
    <location>
        <begin position="1"/>
        <end position="487"/>
    </location>
</feature>
<feature type="active site" evidence="1">
    <location>
        <position position="244"/>
    </location>
</feature>
<feature type="active site" evidence="1">
    <location>
        <position position="278"/>
    </location>
</feature>
<feature type="binding site" evidence="1">
    <location>
        <begin position="221"/>
        <end position="226"/>
    </location>
    <ligand>
        <name>NAD(+)</name>
        <dbReference type="ChEBI" id="CHEBI:57540"/>
    </ligand>
</feature>
<accession>A9AD19</accession>
<evidence type="ECO:0000255" key="1">
    <source>
        <dbReference type="HAMAP-Rule" id="MF_01174"/>
    </source>
</evidence>
<gene>
    <name evidence="1" type="primary">astD</name>
    <name type="ordered locus">Bmul_2121</name>
    <name type="ordered locus">BMULJ_01123</name>
</gene>
<protein>
    <recommendedName>
        <fullName evidence="1">N-succinylglutamate 5-semialdehyde dehydrogenase</fullName>
        <ecNumber evidence="1">1.2.1.71</ecNumber>
    </recommendedName>
    <alternativeName>
        <fullName evidence="1">Succinylglutamic semialdehyde dehydrogenase</fullName>
        <shortName evidence="1">SGSD</shortName>
    </alternativeName>
</protein>
<organism>
    <name type="scientific">Burkholderia multivorans (strain ATCC 17616 / 249)</name>
    <dbReference type="NCBI Taxonomy" id="395019"/>
    <lineage>
        <taxon>Bacteria</taxon>
        <taxon>Pseudomonadati</taxon>
        <taxon>Pseudomonadota</taxon>
        <taxon>Betaproteobacteria</taxon>
        <taxon>Burkholderiales</taxon>
        <taxon>Burkholderiaceae</taxon>
        <taxon>Burkholderia</taxon>
        <taxon>Burkholderia cepacia complex</taxon>
    </lineage>
</organism>
<name>ASTD_BURM1</name>
<dbReference type="EC" id="1.2.1.71" evidence="1"/>
<dbReference type="EMBL" id="CP000868">
    <property type="protein sequence ID" value="ABX15806.1"/>
    <property type="molecule type" value="Genomic_DNA"/>
</dbReference>
<dbReference type="EMBL" id="AP009385">
    <property type="protein sequence ID" value="BAG43063.1"/>
    <property type="molecule type" value="Genomic_DNA"/>
</dbReference>
<dbReference type="RefSeq" id="WP_012213760.1">
    <property type="nucleotide sequence ID" value="NC_010084.1"/>
</dbReference>
<dbReference type="SMR" id="A9AD19"/>
<dbReference type="STRING" id="395019.BMULJ_01123"/>
<dbReference type="KEGG" id="bmj:BMULJ_01123"/>
<dbReference type="KEGG" id="bmu:Bmul_2121"/>
<dbReference type="eggNOG" id="COG1012">
    <property type="taxonomic scope" value="Bacteria"/>
</dbReference>
<dbReference type="HOGENOM" id="CLU_005391_1_0_4"/>
<dbReference type="UniPathway" id="UPA00185">
    <property type="reaction ID" value="UER00282"/>
</dbReference>
<dbReference type="Proteomes" id="UP000008815">
    <property type="component" value="Chromosome 1"/>
</dbReference>
<dbReference type="GO" id="GO:0043824">
    <property type="term" value="F:succinylglutamate-semialdehyde dehydrogenase activity"/>
    <property type="evidence" value="ECO:0007669"/>
    <property type="project" value="UniProtKB-EC"/>
</dbReference>
<dbReference type="GO" id="GO:0019544">
    <property type="term" value="P:arginine catabolic process to glutamate"/>
    <property type="evidence" value="ECO:0007669"/>
    <property type="project" value="UniProtKB-UniRule"/>
</dbReference>
<dbReference type="GO" id="GO:0019545">
    <property type="term" value="P:arginine catabolic process to succinate"/>
    <property type="evidence" value="ECO:0007669"/>
    <property type="project" value="UniProtKB-UniRule"/>
</dbReference>
<dbReference type="CDD" id="cd07095">
    <property type="entry name" value="ALDH_SGSD_AstD"/>
    <property type="match status" value="1"/>
</dbReference>
<dbReference type="FunFam" id="3.40.605.10:FF:000010">
    <property type="entry name" value="N-succinylglutamate 5-semialdehyde dehydrogenase"/>
    <property type="match status" value="1"/>
</dbReference>
<dbReference type="Gene3D" id="3.40.605.10">
    <property type="entry name" value="Aldehyde Dehydrogenase, Chain A, domain 1"/>
    <property type="match status" value="1"/>
</dbReference>
<dbReference type="Gene3D" id="3.40.309.10">
    <property type="entry name" value="Aldehyde Dehydrogenase, Chain A, domain 2"/>
    <property type="match status" value="1"/>
</dbReference>
<dbReference type="HAMAP" id="MF_01174">
    <property type="entry name" value="Aldedh_AstD"/>
    <property type="match status" value="1"/>
</dbReference>
<dbReference type="InterPro" id="IPR016161">
    <property type="entry name" value="Ald_DH/histidinol_DH"/>
</dbReference>
<dbReference type="InterPro" id="IPR016163">
    <property type="entry name" value="Ald_DH_C"/>
</dbReference>
<dbReference type="InterPro" id="IPR016160">
    <property type="entry name" value="Ald_DH_CS_CYS"/>
</dbReference>
<dbReference type="InterPro" id="IPR029510">
    <property type="entry name" value="Ald_DH_CS_GLU"/>
</dbReference>
<dbReference type="InterPro" id="IPR016162">
    <property type="entry name" value="Ald_DH_N"/>
</dbReference>
<dbReference type="InterPro" id="IPR015590">
    <property type="entry name" value="Aldehyde_DH_dom"/>
</dbReference>
<dbReference type="InterPro" id="IPR017649">
    <property type="entry name" value="SuccinylGlu_semiald_DH_AstD"/>
</dbReference>
<dbReference type="NCBIfam" id="TIGR03240">
    <property type="entry name" value="arg_catab_astD"/>
    <property type="match status" value="1"/>
</dbReference>
<dbReference type="NCBIfam" id="NF006992">
    <property type="entry name" value="PRK09457.1"/>
    <property type="match status" value="1"/>
</dbReference>
<dbReference type="PANTHER" id="PTHR11699">
    <property type="entry name" value="ALDEHYDE DEHYDROGENASE-RELATED"/>
    <property type="match status" value="1"/>
</dbReference>
<dbReference type="Pfam" id="PF00171">
    <property type="entry name" value="Aldedh"/>
    <property type="match status" value="1"/>
</dbReference>
<dbReference type="SUPFAM" id="SSF53720">
    <property type="entry name" value="ALDH-like"/>
    <property type="match status" value="1"/>
</dbReference>
<dbReference type="PROSITE" id="PS00070">
    <property type="entry name" value="ALDEHYDE_DEHYDR_CYS"/>
    <property type="match status" value="1"/>
</dbReference>
<dbReference type="PROSITE" id="PS00687">
    <property type="entry name" value="ALDEHYDE_DEHYDR_GLU"/>
    <property type="match status" value="1"/>
</dbReference>
<keyword id="KW-0056">Arginine metabolism</keyword>
<keyword id="KW-0520">NAD</keyword>
<keyword id="KW-0560">Oxidoreductase</keyword>
<keyword id="KW-1185">Reference proteome</keyword>
<reference key="1">
    <citation type="submission" date="2007-10" db="EMBL/GenBank/DDBJ databases">
        <title>Complete sequence of chromosome 1 of Burkholderia multivorans ATCC 17616.</title>
        <authorList>
            <person name="Copeland A."/>
            <person name="Lucas S."/>
            <person name="Lapidus A."/>
            <person name="Barry K."/>
            <person name="Glavina del Rio T."/>
            <person name="Dalin E."/>
            <person name="Tice H."/>
            <person name="Pitluck S."/>
            <person name="Chain P."/>
            <person name="Malfatti S."/>
            <person name="Shin M."/>
            <person name="Vergez L."/>
            <person name="Schmutz J."/>
            <person name="Larimer F."/>
            <person name="Land M."/>
            <person name="Hauser L."/>
            <person name="Kyrpides N."/>
            <person name="Kim E."/>
            <person name="Tiedje J."/>
            <person name="Richardson P."/>
        </authorList>
    </citation>
    <scope>NUCLEOTIDE SEQUENCE [LARGE SCALE GENOMIC DNA]</scope>
    <source>
        <strain>ATCC 17616 / 249</strain>
    </source>
</reference>
<reference key="2">
    <citation type="submission" date="2007-04" db="EMBL/GenBank/DDBJ databases">
        <title>Complete genome sequence of Burkholderia multivorans ATCC 17616.</title>
        <authorList>
            <person name="Ohtsubo Y."/>
            <person name="Yamashita A."/>
            <person name="Kurokawa K."/>
            <person name="Takami H."/>
            <person name="Yuhara S."/>
            <person name="Nishiyama E."/>
            <person name="Endo R."/>
            <person name="Miyazaki R."/>
            <person name="Ono A."/>
            <person name="Yano K."/>
            <person name="Ito M."/>
            <person name="Sota M."/>
            <person name="Yuji N."/>
            <person name="Hattori M."/>
            <person name="Tsuda M."/>
        </authorList>
    </citation>
    <scope>NUCLEOTIDE SEQUENCE [LARGE SCALE GENOMIC DNA]</scope>
    <source>
        <strain>ATCC 17616 / 249</strain>
    </source>
</reference>